<sequence>MDYKQTLNLPDTQFPMRGNLPKREPEILEKWQSMGLYEKMEEAGRTRPNFTLHDGPPYANGHIHIGHALNKILKDIVLKSRRMKGFYAPYVPGWDCHGLPIELMVDKKLGKKKRDMTKVEIRKECRVYADQWVKIQSEEFERLGVMGEWDRPYLTMTHHYEAVTARELARFVEKGGLFKGKKPIHWCSSCVTALAEAEVEYADHKSPSIYVKFPFDGELPAELNDLAGRKLSFVIWTTTPWTIPANLAVCLNPNLPYAVVETGDELLVMAEGLVSGVMQELGLENYRVLKTFEAPIFERKTCRHPFYDRPSLLILGDHVTLEAGTGCVHTAPGHGQDDYVVGLAYGLDVYNPVDNYGRYYEDVEFFGGMKINQANGAVNAKLTEVGALLKESEVSHSYPHCWRCKKPIIFRATEQWFISMEANGLREKALGHINDVNWVPRWGRDRIYNMVENRPDWCISRQRSWGVPITIFYCAKCGEALEDSKVMDYVADLFEEGGSDLWFDKPAKELMPAGTTCPGCGHDEFTKETDILDVWFDSGVSHAAVLDNRDYLSWPADLYLEGSDQHRGWFHSSLLASVGTRELTPYKSVLTHGFVVDGKGKKMSKSVGNVVAPEEVIKKYGAEILRLWVAAQDYRDDIRISNEILQRLSDAYRRIRNTARYILGNLSGFDPSRDMVADDQLLELDRWALAKLEDLAGRVEKAYEDYEFHIIYHAVHNFCSVEMSSFYLDVLKDRLYVSGTDSIARRSAQTAMYRILDCITRLIAPVLSFTAEEIWAFMPGERSESVHLGEFVQFPTSFRDAALEERYDNLLEIRSDVSKALELARNEKVIGHSLDARVLLSAPAGATLELLEKYRDQLASLFIVSQVELVDDLADGLTGENLPDLKVKVEKALGEKCERCWNYATSVGDSAEHPALCHRCVAVLTDR</sequence>
<protein>
    <recommendedName>
        <fullName evidence="1">Isoleucine--tRNA ligase</fullName>
        <ecNumber evidence="1">6.1.1.5</ecNumber>
    </recommendedName>
    <alternativeName>
        <fullName evidence="1">Isoleucyl-tRNA synthetase</fullName>
        <shortName evidence="1">IleRS</shortName>
    </alternativeName>
</protein>
<reference key="1">
    <citation type="submission" date="2005-10" db="EMBL/GenBank/DDBJ databases">
        <title>Complete sequence of Pelobacter carbinolicus DSM 2380.</title>
        <authorList>
            <person name="Copeland A."/>
            <person name="Lucas S."/>
            <person name="Lapidus A."/>
            <person name="Barry K."/>
            <person name="Detter J.C."/>
            <person name="Glavina T."/>
            <person name="Hammon N."/>
            <person name="Israni S."/>
            <person name="Pitluck S."/>
            <person name="Chertkov O."/>
            <person name="Schmutz J."/>
            <person name="Larimer F."/>
            <person name="Land M."/>
            <person name="Kyrpides N."/>
            <person name="Ivanova N."/>
            <person name="Richardson P."/>
        </authorList>
    </citation>
    <scope>NUCLEOTIDE SEQUENCE [LARGE SCALE GENOMIC DNA]</scope>
    <source>
        <strain>DSM 2380 / NBRC 103641 / GraBd1</strain>
    </source>
</reference>
<gene>
    <name evidence="1" type="primary">ileS</name>
    <name type="ordered locus">Pcar_2455</name>
</gene>
<feature type="chain" id="PRO_0000098436" description="Isoleucine--tRNA ligase">
    <location>
        <begin position="1"/>
        <end position="927"/>
    </location>
</feature>
<feature type="short sequence motif" description="'HIGH' region">
    <location>
        <begin position="57"/>
        <end position="67"/>
    </location>
</feature>
<feature type="short sequence motif" description="'KMSKS' region">
    <location>
        <begin position="602"/>
        <end position="606"/>
    </location>
</feature>
<feature type="binding site" evidence="1">
    <location>
        <position position="561"/>
    </location>
    <ligand>
        <name>L-isoleucyl-5'-AMP</name>
        <dbReference type="ChEBI" id="CHEBI:178002"/>
    </ligand>
</feature>
<feature type="binding site" evidence="1">
    <location>
        <position position="605"/>
    </location>
    <ligand>
        <name>ATP</name>
        <dbReference type="ChEBI" id="CHEBI:30616"/>
    </ligand>
</feature>
<feature type="binding site" evidence="1">
    <location>
        <position position="897"/>
    </location>
    <ligand>
        <name>Zn(2+)</name>
        <dbReference type="ChEBI" id="CHEBI:29105"/>
    </ligand>
</feature>
<feature type="binding site" evidence="1">
    <location>
        <position position="900"/>
    </location>
    <ligand>
        <name>Zn(2+)</name>
        <dbReference type="ChEBI" id="CHEBI:29105"/>
    </ligand>
</feature>
<feature type="binding site" evidence="1">
    <location>
        <position position="917"/>
    </location>
    <ligand>
        <name>Zn(2+)</name>
        <dbReference type="ChEBI" id="CHEBI:29105"/>
    </ligand>
</feature>
<feature type="binding site" evidence="1">
    <location>
        <position position="920"/>
    </location>
    <ligand>
        <name>Zn(2+)</name>
        <dbReference type="ChEBI" id="CHEBI:29105"/>
    </ligand>
</feature>
<name>SYI_SYNC1</name>
<dbReference type="EC" id="6.1.1.5" evidence="1"/>
<dbReference type="EMBL" id="CP000142">
    <property type="protein sequence ID" value="ABA89694.1"/>
    <property type="molecule type" value="Genomic_DNA"/>
</dbReference>
<dbReference type="RefSeq" id="WP_011342220.1">
    <property type="nucleotide sequence ID" value="NC_007498.2"/>
</dbReference>
<dbReference type="SMR" id="Q3A1R3"/>
<dbReference type="STRING" id="338963.Pcar_2455"/>
<dbReference type="KEGG" id="pca:Pcar_2455"/>
<dbReference type="eggNOG" id="COG0060">
    <property type="taxonomic scope" value="Bacteria"/>
</dbReference>
<dbReference type="HOGENOM" id="CLU_001493_7_1_7"/>
<dbReference type="OrthoDB" id="9810365at2"/>
<dbReference type="Proteomes" id="UP000002534">
    <property type="component" value="Chromosome"/>
</dbReference>
<dbReference type="GO" id="GO:0005829">
    <property type="term" value="C:cytosol"/>
    <property type="evidence" value="ECO:0007669"/>
    <property type="project" value="TreeGrafter"/>
</dbReference>
<dbReference type="GO" id="GO:0002161">
    <property type="term" value="F:aminoacyl-tRNA deacylase activity"/>
    <property type="evidence" value="ECO:0007669"/>
    <property type="project" value="InterPro"/>
</dbReference>
<dbReference type="GO" id="GO:0005524">
    <property type="term" value="F:ATP binding"/>
    <property type="evidence" value="ECO:0007669"/>
    <property type="project" value="UniProtKB-UniRule"/>
</dbReference>
<dbReference type="GO" id="GO:0004822">
    <property type="term" value="F:isoleucine-tRNA ligase activity"/>
    <property type="evidence" value="ECO:0007669"/>
    <property type="project" value="UniProtKB-UniRule"/>
</dbReference>
<dbReference type="GO" id="GO:0000049">
    <property type="term" value="F:tRNA binding"/>
    <property type="evidence" value="ECO:0007669"/>
    <property type="project" value="InterPro"/>
</dbReference>
<dbReference type="GO" id="GO:0008270">
    <property type="term" value="F:zinc ion binding"/>
    <property type="evidence" value="ECO:0007669"/>
    <property type="project" value="UniProtKB-UniRule"/>
</dbReference>
<dbReference type="GO" id="GO:0006428">
    <property type="term" value="P:isoleucyl-tRNA aminoacylation"/>
    <property type="evidence" value="ECO:0007669"/>
    <property type="project" value="UniProtKB-UniRule"/>
</dbReference>
<dbReference type="CDD" id="cd07960">
    <property type="entry name" value="Anticodon_Ia_Ile_BEm"/>
    <property type="match status" value="1"/>
</dbReference>
<dbReference type="CDD" id="cd00818">
    <property type="entry name" value="IleRS_core"/>
    <property type="match status" value="1"/>
</dbReference>
<dbReference type="FunFam" id="1.10.730.20:FF:000001">
    <property type="entry name" value="Isoleucine--tRNA ligase"/>
    <property type="match status" value="1"/>
</dbReference>
<dbReference type="Gene3D" id="1.10.730.20">
    <property type="match status" value="1"/>
</dbReference>
<dbReference type="Gene3D" id="3.40.50.620">
    <property type="entry name" value="HUPs"/>
    <property type="match status" value="2"/>
</dbReference>
<dbReference type="Gene3D" id="1.10.10.830">
    <property type="entry name" value="Ile-tRNA synthetase CP2 domain-like"/>
    <property type="match status" value="1"/>
</dbReference>
<dbReference type="Gene3D" id="3.90.740.10">
    <property type="entry name" value="Valyl/Leucyl/Isoleucyl-tRNA synthetase, editing domain"/>
    <property type="match status" value="1"/>
</dbReference>
<dbReference type="HAMAP" id="MF_02002">
    <property type="entry name" value="Ile_tRNA_synth_type1"/>
    <property type="match status" value="1"/>
</dbReference>
<dbReference type="InterPro" id="IPR001412">
    <property type="entry name" value="aa-tRNA-synth_I_CS"/>
</dbReference>
<dbReference type="InterPro" id="IPR002300">
    <property type="entry name" value="aa-tRNA-synth_Ia"/>
</dbReference>
<dbReference type="InterPro" id="IPR033708">
    <property type="entry name" value="Anticodon_Ile_BEm"/>
</dbReference>
<dbReference type="InterPro" id="IPR002301">
    <property type="entry name" value="Ile-tRNA-ligase"/>
</dbReference>
<dbReference type="InterPro" id="IPR023585">
    <property type="entry name" value="Ile-tRNA-ligase_type1"/>
</dbReference>
<dbReference type="InterPro" id="IPR050081">
    <property type="entry name" value="Ile-tRNA_ligase"/>
</dbReference>
<dbReference type="InterPro" id="IPR013155">
    <property type="entry name" value="M/V/L/I-tRNA-synth_anticd-bd"/>
</dbReference>
<dbReference type="InterPro" id="IPR014729">
    <property type="entry name" value="Rossmann-like_a/b/a_fold"/>
</dbReference>
<dbReference type="InterPro" id="IPR009080">
    <property type="entry name" value="tRNAsynth_Ia_anticodon-bd"/>
</dbReference>
<dbReference type="InterPro" id="IPR009008">
    <property type="entry name" value="Val/Leu/Ile-tRNA-synth_edit"/>
</dbReference>
<dbReference type="InterPro" id="IPR010663">
    <property type="entry name" value="Znf_FPG/IleRS"/>
</dbReference>
<dbReference type="NCBIfam" id="TIGR00392">
    <property type="entry name" value="ileS"/>
    <property type="match status" value="1"/>
</dbReference>
<dbReference type="PANTHER" id="PTHR42765:SF1">
    <property type="entry name" value="ISOLEUCINE--TRNA LIGASE, MITOCHONDRIAL"/>
    <property type="match status" value="1"/>
</dbReference>
<dbReference type="PANTHER" id="PTHR42765">
    <property type="entry name" value="SOLEUCYL-TRNA SYNTHETASE"/>
    <property type="match status" value="1"/>
</dbReference>
<dbReference type="Pfam" id="PF08264">
    <property type="entry name" value="Anticodon_1"/>
    <property type="match status" value="1"/>
</dbReference>
<dbReference type="Pfam" id="PF00133">
    <property type="entry name" value="tRNA-synt_1"/>
    <property type="match status" value="1"/>
</dbReference>
<dbReference type="Pfam" id="PF06827">
    <property type="entry name" value="zf-FPG_IleRS"/>
    <property type="match status" value="1"/>
</dbReference>
<dbReference type="PRINTS" id="PR00984">
    <property type="entry name" value="TRNASYNTHILE"/>
</dbReference>
<dbReference type="SUPFAM" id="SSF47323">
    <property type="entry name" value="Anticodon-binding domain of a subclass of class I aminoacyl-tRNA synthetases"/>
    <property type="match status" value="1"/>
</dbReference>
<dbReference type="SUPFAM" id="SSF52374">
    <property type="entry name" value="Nucleotidylyl transferase"/>
    <property type="match status" value="1"/>
</dbReference>
<dbReference type="SUPFAM" id="SSF50677">
    <property type="entry name" value="ValRS/IleRS/LeuRS editing domain"/>
    <property type="match status" value="1"/>
</dbReference>
<dbReference type="PROSITE" id="PS00178">
    <property type="entry name" value="AA_TRNA_LIGASE_I"/>
    <property type="match status" value="1"/>
</dbReference>
<proteinExistence type="inferred from homology"/>
<organism>
    <name type="scientific">Syntrophotalea carbinolica (strain DSM 2380 / NBRC 103641 / GraBd1)</name>
    <name type="common">Pelobacter carbinolicus</name>
    <dbReference type="NCBI Taxonomy" id="338963"/>
    <lineage>
        <taxon>Bacteria</taxon>
        <taxon>Pseudomonadati</taxon>
        <taxon>Thermodesulfobacteriota</taxon>
        <taxon>Desulfuromonadia</taxon>
        <taxon>Desulfuromonadales</taxon>
        <taxon>Syntrophotaleaceae</taxon>
        <taxon>Syntrophotalea</taxon>
    </lineage>
</organism>
<evidence type="ECO:0000255" key="1">
    <source>
        <dbReference type="HAMAP-Rule" id="MF_02002"/>
    </source>
</evidence>
<comment type="function">
    <text evidence="1">Catalyzes the attachment of isoleucine to tRNA(Ile). As IleRS can inadvertently accommodate and process structurally similar amino acids such as valine, to avoid such errors it has two additional distinct tRNA(Ile)-dependent editing activities. One activity is designated as 'pretransfer' editing and involves the hydrolysis of activated Val-AMP. The other activity is designated 'posttransfer' editing and involves deacylation of mischarged Val-tRNA(Ile).</text>
</comment>
<comment type="catalytic activity">
    <reaction evidence="1">
        <text>tRNA(Ile) + L-isoleucine + ATP = L-isoleucyl-tRNA(Ile) + AMP + diphosphate</text>
        <dbReference type="Rhea" id="RHEA:11060"/>
        <dbReference type="Rhea" id="RHEA-COMP:9666"/>
        <dbReference type="Rhea" id="RHEA-COMP:9695"/>
        <dbReference type="ChEBI" id="CHEBI:30616"/>
        <dbReference type="ChEBI" id="CHEBI:33019"/>
        <dbReference type="ChEBI" id="CHEBI:58045"/>
        <dbReference type="ChEBI" id="CHEBI:78442"/>
        <dbReference type="ChEBI" id="CHEBI:78528"/>
        <dbReference type="ChEBI" id="CHEBI:456215"/>
        <dbReference type="EC" id="6.1.1.5"/>
    </reaction>
</comment>
<comment type="cofactor">
    <cofactor evidence="1">
        <name>Zn(2+)</name>
        <dbReference type="ChEBI" id="CHEBI:29105"/>
    </cofactor>
    <text evidence="1">Binds 1 zinc ion per subunit.</text>
</comment>
<comment type="subunit">
    <text evidence="1">Monomer.</text>
</comment>
<comment type="subcellular location">
    <subcellularLocation>
        <location evidence="1">Cytoplasm</location>
    </subcellularLocation>
</comment>
<comment type="domain">
    <text evidence="1">IleRS has two distinct active sites: one for aminoacylation and one for editing. The misactivated valine is translocated from the active site to the editing site, which sterically excludes the correctly activated isoleucine. The single editing site contains two valyl binding pockets, one specific for each substrate (Val-AMP or Val-tRNA(Ile)).</text>
</comment>
<comment type="similarity">
    <text evidence="1">Belongs to the class-I aminoacyl-tRNA synthetase family. IleS type 1 subfamily.</text>
</comment>
<keyword id="KW-0030">Aminoacyl-tRNA synthetase</keyword>
<keyword id="KW-0067">ATP-binding</keyword>
<keyword id="KW-0963">Cytoplasm</keyword>
<keyword id="KW-0436">Ligase</keyword>
<keyword id="KW-0479">Metal-binding</keyword>
<keyword id="KW-0547">Nucleotide-binding</keyword>
<keyword id="KW-0648">Protein biosynthesis</keyword>
<keyword id="KW-1185">Reference proteome</keyword>
<keyword id="KW-0862">Zinc</keyword>
<accession>Q3A1R3</accession>